<gene>
    <name type="ordered locus">BQ2027_MB2590</name>
</gene>
<name>Y2590_MYCBO</name>
<keyword id="KW-1003">Cell membrane</keyword>
<keyword id="KW-0472">Membrane</keyword>
<keyword id="KW-1185">Reference proteome</keyword>
<keyword id="KW-0812">Transmembrane</keyword>
<keyword id="KW-1133">Transmembrane helix</keyword>
<protein>
    <recommendedName>
        <fullName>Uncharacterized protein Mb2590</fullName>
    </recommendedName>
</protein>
<comment type="subcellular location">
    <subcellularLocation>
        <location evidence="3">Cell membrane</location>
        <topology evidence="3">Multi-pass membrane protein</topology>
    </subcellularLocation>
</comment>
<comment type="similarity">
    <text evidence="3">To M.tuberculosis Rv2560.</text>
</comment>
<feature type="chain" id="PRO_0000104040" description="Uncharacterized protein Mb2590">
    <location>
        <begin position="1"/>
        <end position="325"/>
    </location>
</feature>
<feature type="transmembrane region" description="Helical" evidence="1">
    <location>
        <begin position="96"/>
        <end position="116"/>
    </location>
</feature>
<feature type="transmembrane region" description="Helical" evidence="1">
    <location>
        <begin position="153"/>
        <end position="173"/>
    </location>
</feature>
<feature type="transmembrane region" description="Helical" evidence="1">
    <location>
        <begin position="205"/>
        <end position="225"/>
    </location>
</feature>
<feature type="transmembrane region" description="Helical" evidence="1">
    <location>
        <begin position="273"/>
        <end position="293"/>
    </location>
</feature>
<feature type="region of interest" description="Disordered" evidence="2">
    <location>
        <begin position="1"/>
        <end position="75"/>
    </location>
</feature>
<feature type="compositionally biased region" description="Pro residues" evidence="2">
    <location>
        <begin position="24"/>
        <end position="70"/>
    </location>
</feature>
<dbReference type="EMBL" id="LT708304">
    <property type="protein sequence ID" value="SIU01208.1"/>
    <property type="molecule type" value="Genomic_DNA"/>
</dbReference>
<dbReference type="RefSeq" id="NP_856236.1">
    <property type="nucleotide sequence ID" value="NC_002945.3"/>
</dbReference>
<dbReference type="RefSeq" id="WP_003899377.1">
    <property type="nucleotide sequence ID" value="NC_002945.4"/>
</dbReference>
<dbReference type="KEGG" id="mbo:BQ2027_MB2590"/>
<dbReference type="PATRIC" id="fig|233413.5.peg.2848"/>
<dbReference type="Proteomes" id="UP000001419">
    <property type="component" value="Chromosome"/>
</dbReference>
<dbReference type="GO" id="GO:0005886">
    <property type="term" value="C:plasma membrane"/>
    <property type="evidence" value="ECO:0007669"/>
    <property type="project" value="UniProtKB-SubCell"/>
</dbReference>
<evidence type="ECO:0000255" key="1"/>
<evidence type="ECO:0000256" key="2">
    <source>
        <dbReference type="SAM" id="MobiDB-lite"/>
    </source>
</evidence>
<evidence type="ECO:0000305" key="3"/>
<organism>
    <name type="scientific">Mycobacterium bovis (strain ATCC BAA-935 / AF2122/97)</name>
    <dbReference type="NCBI Taxonomy" id="233413"/>
    <lineage>
        <taxon>Bacteria</taxon>
        <taxon>Bacillati</taxon>
        <taxon>Actinomycetota</taxon>
        <taxon>Actinomycetes</taxon>
        <taxon>Mycobacteriales</taxon>
        <taxon>Mycobacteriaceae</taxon>
        <taxon>Mycobacterium</taxon>
        <taxon>Mycobacterium tuberculosis complex</taxon>
    </lineage>
</organism>
<accession>P59983</accession>
<accession>A0A1R3Y1Z4</accession>
<accession>X2BL32</accession>
<sequence>MSQPPEHPGNPADPQGGNQGAGSYPPPGYGAPPPPPGYGPPPGTYLPPGYNAPPPPPGYGPPPGPPPPGYPTHLQSSGFSVGDAISWSWNRFTQNAVTLVVPVLAYAVALAAVIGATAGLVVALSDRATTAYTNTSGVSSESVDITMTPAAGIVMFLGYIALFALVLYMHAGILTGCLDIADGKPVTIATFFRPRNLGLVLVTGLLIVALTFIGGLLCVIPGLIFGFVAQFAVAFAVDRSTSPIDSVKASIETVGSNIGGSVLSWLAQLTAVLVGELLCFVGMLIGIPVAALIHVYTYRKLSGGQVVEAVRPAPPVGWPPGPQLA</sequence>
<proteinExistence type="predicted"/>
<reference key="1">
    <citation type="journal article" date="2003" name="Proc. Natl. Acad. Sci. U.S.A.">
        <title>The complete genome sequence of Mycobacterium bovis.</title>
        <authorList>
            <person name="Garnier T."/>
            <person name="Eiglmeier K."/>
            <person name="Camus J.-C."/>
            <person name="Medina N."/>
            <person name="Mansoor H."/>
            <person name="Pryor M."/>
            <person name="Duthoy S."/>
            <person name="Grondin S."/>
            <person name="Lacroix C."/>
            <person name="Monsempe C."/>
            <person name="Simon S."/>
            <person name="Harris B."/>
            <person name="Atkin R."/>
            <person name="Doggett J."/>
            <person name="Mayes R."/>
            <person name="Keating L."/>
            <person name="Wheeler P.R."/>
            <person name="Parkhill J."/>
            <person name="Barrell B.G."/>
            <person name="Cole S.T."/>
            <person name="Gordon S.V."/>
            <person name="Hewinson R.G."/>
        </authorList>
    </citation>
    <scope>NUCLEOTIDE SEQUENCE [LARGE SCALE GENOMIC DNA]</scope>
    <source>
        <strain>ATCC BAA-935 / AF2122/97</strain>
    </source>
</reference>
<reference key="2">
    <citation type="journal article" date="2017" name="Genome Announc.">
        <title>Updated reference genome sequence and annotation of Mycobacterium bovis AF2122/97.</title>
        <authorList>
            <person name="Malone K.M."/>
            <person name="Farrell D."/>
            <person name="Stuber T.P."/>
            <person name="Schubert O.T."/>
            <person name="Aebersold R."/>
            <person name="Robbe-Austerman S."/>
            <person name="Gordon S.V."/>
        </authorList>
    </citation>
    <scope>NUCLEOTIDE SEQUENCE [LARGE SCALE GENOMIC DNA]</scope>
    <scope>GENOME REANNOTATION</scope>
    <source>
        <strain>ATCC BAA-935 / AF2122/97</strain>
    </source>
</reference>